<accession>P24864</accession>
<accession>A8K684</accession>
<accession>Q14091</accession>
<accession>Q8NFG1</accession>
<accession>Q92501</accession>
<accession>Q9UD21</accession>
<protein>
    <recommendedName>
        <fullName>G1/S-specific cyclin-E1</fullName>
    </recommendedName>
</protein>
<proteinExistence type="evidence at protein level"/>
<gene>
    <name type="primary">CCNE1</name>
    <name type="synonym">CCNE</name>
</gene>
<reference key="1">
    <citation type="journal article" date="1991" name="Cell">
        <title>Isolation of three novel human cyclins by rescue of G1 cyclin (Cln) function in yeast.</title>
        <authorList>
            <person name="Lew D.J."/>
            <person name="Dulic V."/>
            <person name="Reed S.I."/>
        </authorList>
    </citation>
    <scope>NUCLEOTIDE SEQUENCE [MRNA] (ISOFORM 3)</scope>
</reference>
<reference key="2">
    <citation type="journal article" date="1991" name="Cell">
        <title>Human cyclin E, a new cyclin that interacts with two members of the CDC2 gene family.</title>
        <authorList>
            <person name="Koff A."/>
            <person name="Cross F."/>
            <person name="Fisher A."/>
            <person name="Schumacher J."/>
            <person name="le Guellec K."/>
            <person name="Philippe M."/>
            <person name="Roberts J.M."/>
        </authorList>
    </citation>
    <scope>NUCLEOTIDE SEQUENCE [MRNA] (ISOFORM 3)</scope>
</reference>
<reference key="3">
    <citation type="journal article" date="1995" name="Mol. Cell. Biol.">
        <title>Human cyclin E, a nuclear protein essential for the G1-to-S phase transition.</title>
        <authorList>
            <person name="Ohtsubo M."/>
            <person name="Theodoras A.M."/>
            <person name="Schumacher J."/>
            <person name="Roberts J.M."/>
            <person name="Pagano M."/>
        </authorList>
    </citation>
    <scope>NUCLEOTIDE SEQUENCE [MRNA] (ISOFORMS E1L AND 3)</scope>
    <scope>FUNCTION</scope>
    <scope>SUBCELLULAR LOCATION</scope>
    <scope>ALTERNATIVE SPLICING</scope>
</reference>
<reference key="4">
    <citation type="journal article" date="2004" name="Nat. Genet.">
        <title>Complete sequencing and characterization of 21,243 full-length human cDNAs.</title>
        <authorList>
            <person name="Ota T."/>
            <person name="Suzuki Y."/>
            <person name="Nishikawa T."/>
            <person name="Otsuki T."/>
            <person name="Sugiyama T."/>
            <person name="Irie R."/>
            <person name="Wakamatsu A."/>
            <person name="Hayashi K."/>
            <person name="Sato H."/>
            <person name="Nagai K."/>
            <person name="Kimura K."/>
            <person name="Makita H."/>
            <person name="Sekine M."/>
            <person name="Obayashi M."/>
            <person name="Nishi T."/>
            <person name="Shibahara T."/>
            <person name="Tanaka T."/>
            <person name="Ishii S."/>
            <person name="Yamamoto J."/>
            <person name="Saito K."/>
            <person name="Kawai Y."/>
            <person name="Isono Y."/>
            <person name="Nakamura Y."/>
            <person name="Nagahari K."/>
            <person name="Murakami K."/>
            <person name="Yasuda T."/>
            <person name="Iwayanagi T."/>
            <person name="Wagatsuma M."/>
            <person name="Shiratori A."/>
            <person name="Sudo H."/>
            <person name="Hosoiri T."/>
            <person name="Kaku Y."/>
            <person name="Kodaira H."/>
            <person name="Kondo H."/>
            <person name="Sugawara M."/>
            <person name="Takahashi M."/>
            <person name="Kanda K."/>
            <person name="Yokoi T."/>
            <person name="Furuya T."/>
            <person name="Kikkawa E."/>
            <person name="Omura Y."/>
            <person name="Abe K."/>
            <person name="Kamihara K."/>
            <person name="Katsuta N."/>
            <person name="Sato K."/>
            <person name="Tanikawa M."/>
            <person name="Yamazaki M."/>
            <person name="Ninomiya K."/>
            <person name="Ishibashi T."/>
            <person name="Yamashita H."/>
            <person name="Murakawa K."/>
            <person name="Fujimori K."/>
            <person name="Tanai H."/>
            <person name="Kimata M."/>
            <person name="Watanabe M."/>
            <person name="Hiraoka S."/>
            <person name="Chiba Y."/>
            <person name="Ishida S."/>
            <person name="Ono Y."/>
            <person name="Takiguchi S."/>
            <person name="Watanabe S."/>
            <person name="Yosida M."/>
            <person name="Hotuta T."/>
            <person name="Kusano J."/>
            <person name="Kanehori K."/>
            <person name="Takahashi-Fujii A."/>
            <person name="Hara H."/>
            <person name="Tanase T.-O."/>
            <person name="Nomura Y."/>
            <person name="Togiya S."/>
            <person name="Komai F."/>
            <person name="Hara R."/>
            <person name="Takeuchi K."/>
            <person name="Arita M."/>
            <person name="Imose N."/>
            <person name="Musashino K."/>
            <person name="Yuuki H."/>
            <person name="Oshima A."/>
            <person name="Sasaki N."/>
            <person name="Aotsuka S."/>
            <person name="Yoshikawa Y."/>
            <person name="Matsunawa H."/>
            <person name="Ichihara T."/>
            <person name="Shiohata N."/>
            <person name="Sano S."/>
            <person name="Moriya S."/>
            <person name="Momiyama H."/>
            <person name="Satoh N."/>
            <person name="Takami S."/>
            <person name="Terashima Y."/>
            <person name="Suzuki O."/>
            <person name="Nakagawa S."/>
            <person name="Senoh A."/>
            <person name="Mizoguchi H."/>
            <person name="Goto Y."/>
            <person name="Shimizu F."/>
            <person name="Wakebe H."/>
            <person name="Hishigaki H."/>
            <person name="Watanabe T."/>
            <person name="Sugiyama A."/>
            <person name="Takemoto M."/>
            <person name="Kawakami B."/>
            <person name="Yamazaki M."/>
            <person name="Watanabe K."/>
            <person name="Kumagai A."/>
            <person name="Itakura S."/>
            <person name="Fukuzumi Y."/>
            <person name="Fujimori Y."/>
            <person name="Komiyama M."/>
            <person name="Tashiro H."/>
            <person name="Tanigami A."/>
            <person name="Fujiwara T."/>
            <person name="Ono T."/>
            <person name="Yamada K."/>
            <person name="Fujii Y."/>
            <person name="Ozaki K."/>
            <person name="Hirao M."/>
            <person name="Ohmori Y."/>
            <person name="Kawabata A."/>
            <person name="Hikiji T."/>
            <person name="Kobatake N."/>
            <person name="Inagaki H."/>
            <person name="Ikema Y."/>
            <person name="Okamoto S."/>
            <person name="Okitani R."/>
            <person name="Kawakami T."/>
            <person name="Noguchi S."/>
            <person name="Itoh T."/>
            <person name="Shigeta K."/>
            <person name="Senba T."/>
            <person name="Matsumura K."/>
            <person name="Nakajima Y."/>
            <person name="Mizuno T."/>
            <person name="Morinaga M."/>
            <person name="Sasaki M."/>
            <person name="Togashi T."/>
            <person name="Oyama M."/>
            <person name="Hata H."/>
            <person name="Watanabe M."/>
            <person name="Komatsu T."/>
            <person name="Mizushima-Sugano J."/>
            <person name="Satoh T."/>
            <person name="Shirai Y."/>
            <person name="Takahashi Y."/>
            <person name="Nakagawa K."/>
            <person name="Okumura K."/>
            <person name="Nagase T."/>
            <person name="Nomura N."/>
            <person name="Kikuchi H."/>
            <person name="Masuho Y."/>
            <person name="Yamashita R."/>
            <person name="Nakai K."/>
            <person name="Yada T."/>
            <person name="Nakamura Y."/>
            <person name="Ohara O."/>
            <person name="Isogai T."/>
            <person name="Sugano S."/>
        </authorList>
    </citation>
    <scope>NUCLEOTIDE SEQUENCE [LARGE SCALE MRNA] (ISOFORM E1L)</scope>
    <source>
        <tissue>Placenta</tissue>
    </source>
</reference>
<reference key="5">
    <citation type="submission" date="2002-06" db="EMBL/GenBank/DDBJ databases">
        <authorList>
            <consortium name="NIEHS SNPs program"/>
        </authorList>
    </citation>
    <scope>NUCLEOTIDE SEQUENCE [GENOMIC DNA]</scope>
</reference>
<reference key="6">
    <citation type="journal article" date="2004" name="Genome Res.">
        <title>The status, quality, and expansion of the NIH full-length cDNA project: the Mammalian Gene Collection (MGC).</title>
        <authorList>
            <consortium name="The MGC Project Team"/>
        </authorList>
    </citation>
    <scope>NUCLEOTIDE SEQUENCE [LARGE SCALE MRNA] (ISOFORM E1L)</scope>
    <source>
        <tissue>Placenta</tissue>
    </source>
</reference>
<reference key="7">
    <citation type="journal article" date="1996" name="Oncogene">
        <title>Regulation of cyclin E transcription by E2Fs and retinoblastoma protein.</title>
        <authorList>
            <person name="Geng Y."/>
            <person name="Eaton E.N."/>
            <person name="Picon M."/>
            <person name="Roberts J.M."/>
            <person name="Lundberg A.S."/>
            <person name="Gifford A."/>
            <person name="Sardet C."/>
            <person name="Weinberg R.A."/>
        </authorList>
    </citation>
    <scope>NUCLEOTIDE SEQUENCE [GENOMIC DNA] OF 1-42</scope>
</reference>
<reference key="8">
    <citation type="journal article" date="1996" name="Genomics">
        <title>Molecular cloning and chromosomal localization of the human cyclin C (CCNC) and cyclin E (CCNE) genes: deletion of the CCNC gene in human tumors.</title>
        <authorList>
            <person name="Li H."/>
            <person name="Lahti J.M."/>
            <person name="Valentine M."/>
            <person name="Saito M."/>
            <person name="Reed S.I."/>
            <person name="Look A.T."/>
            <person name="Kidd V.J."/>
        </authorList>
    </citation>
    <scope>NUCLEOTIDE SEQUENCE [GENOMIC DNA] OF 281-370</scope>
</reference>
<reference key="9">
    <citation type="journal article" date="1994" name="J. Cell Sci.">
        <title>Alternative splicing of human cyclin E.</title>
        <authorList>
            <person name="Sewing A."/>
            <person name="Roenicke V."/>
            <person name="Buerger C."/>
            <person name="Funk M."/>
            <person name="Mueller R."/>
        </authorList>
    </citation>
    <scope>ALTERNATIVE SPLICING</scope>
</reference>
<reference key="10">
    <citation type="journal article" date="1996" name="EMBO J.">
        <title>Activation of cyclin E/CDK2 is coupled to site-specific autophosphorylation and ubiquitin-dependent degradation of cyclin E.</title>
        <authorList>
            <person name="Won K.A."/>
            <person name="Reed S.I."/>
        </authorList>
    </citation>
    <scope>PHOSPHORYLATION AT THR-395</scope>
</reference>
<reference key="11">
    <citation type="journal article" date="1998" name="Oncogene">
        <title>Cyclin E2, a novel human G1 cyclin and activating partner of CDK2 and CDK3, is induced by viral oncoproteins.</title>
        <authorList>
            <person name="Zariwala M."/>
            <person name="Liu J."/>
            <person name="Xiong Y."/>
        </authorList>
    </citation>
    <scope>TISSUE SPECIFICITY</scope>
</reference>
<reference key="12">
    <citation type="journal article" date="2003" name="Mol. Cell">
        <title>Multisite phosphorylation by Cdk2 and GSK3 controls cyclin E degradation.</title>
        <authorList>
            <person name="Welcker M."/>
            <person name="Singer J."/>
            <person name="Loeb K.R."/>
            <person name="Grim J."/>
            <person name="Bloecher A."/>
            <person name="Gurien-West M."/>
            <person name="Clurman B.E."/>
            <person name="Roberts J.M."/>
        </authorList>
    </citation>
    <scope>PHOSPHORYLATION AT THR-77; SER-387; THR-395 AND SER-399</scope>
</reference>
<reference key="13">
    <citation type="journal article" date="2004" name="Biochem. Biophys. Res. Commun.">
        <title>NIRF induces G1 arrest and associates with Cdk2.</title>
        <authorList>
            <person name="Li Y."/>
            <person name="Mori T."/>
            <person name="Hata H."/>
            <person name="Homma Y."/>
            <person name="Kochi H."/>
        </authorList>
    </citation>
    <scope>IDENTIFICATION IN A COMPLEX WITH UHRF2 AND CDK2</scope>
</reference>
<reference key="14">
    <citation type="journal article" date="2008" name="Mol. Cell">
        <title>Kinase-selective enrichment enables quantitative phosphoproteomics of the kinome across the cell cycle.</title>
        <authorList>
            <person name="Daub H."/>
            <person name="Olsen J.V."/>
            <person name="Bairlein M."/>
            <person name="Gnad F."/>
            <person name="Oppermann F.S."/>
            <person name="Korner R."/>
            <person name="Greff Z."/>
            <person name="Keri G."/>
            <person name="Stemmann O."/>
            <person name="Mann M."/>
        </authorList>
    </citation>
    <scope>PHOSPHORYLATION [LARGE SCALE ANALYSIS] AT SER-103; SER-387 AND THR-395</scope>
    <scope>IDENTIFICATION BY MASS SPECTROMETRY [LARGE SCALE ANALYSIS]</scope>
    <source>
        <tissue>Cervix carcinoma</tissue>
    </source>
</reference>
<reference key="15">
    <citation type="journal article" date="2008" name="Proc. Natl. Acad. Sci. U.S.A.">
        <title>A quantitative atlas of mitotic phosphorylation.</title>
        <authorList>
            <person name="Dephoure N."/>
            <person name="Zhou C."/>
            <person name="Villen J."/>
            <person name="Beausoleil S.A."/>
            <person name="Bakalarski C.E."/>
            <person name="Elledge S.J."/>
            <person name="Gygi S.P."/>
        </authorList>
    </citation>
    <scope>IDENTIFICATION BY MASS SPECTROMETRY [LARGE SCALE ANALYSIS]</scope>
    <source>
        <tissue>Cervix carcinoma</tissue>
    </source>
</reference>
<reference key="16">
    <citation type="journal article" date="2009" name="Mol. Cell. Proteomics">
        <title>Large-scale proteomics analysis of the human kinome.</title>
        <authorList>
            <person name="Oppermann F.S."/>
            <person name="Gnad F."/>
            <person name="Olsen J.V."/>
            <person name="Hornberger R."/>
            <person name="Greff Z."/>
            <person name="Keri G."/>
            <person name="Mann M."/>
            <person name="Daub H."/>
        </authorList>
    </citation>
    <scope>PHOSPHORYLATION [LARGE SCALE ANALYSIS] AT SER-103 AND SER-387</scope>
    <scope>IDENTIFICATION BY MASS SPECTROMETRY [LARGE SCALE ANALYSIS]</scope>
</reference>
<reference key="17">
    <citation type="journal article" date="2011" name="Cell Cycle">
        <title>NIRF constitutes a nodal point in the cell cycle network and is a candidate tumor suppressor.</title>
        <authorList>
            <person name="Mori T."/>
            <person name="Ikeda D.D."/>
            <person name="Fukushima T."/>
            <person name="Takenoshita S."/>
            <person name="Kochi H."/>
        </authorList>
    </citation>
    <scope>UBIQUITINATION</scope>
    <scope>INTERACTION WITH UHRF2</scope>
</reference>
<reference key="18">
    <citation type="journal article" date="2011" name="J. Biol. Chem.">
        <title>Inhibitor of cyclin-dependent kinase (CDK) interacting with cyclin A1 (INCA1) regulates proliferation and is repressed by oncogenic signaling.</title>
        <authorList>
            <person name="Baeumer N."/>
            <person name="Tickenbrock L."/>
            <person name="Tschanter P."/>
            <person name="Lohmeyer L."/>
            <person name="Diederichs S."/>
            <person name="Baeumer S."/>
            <person name="Skryabin B.V."/>
            <person name="Zhang F."/>
            <person name="Agrawal-Singh S."/>
            <person name="Koehler G."/>
            <person name="Berdel W.E."/>
            <person name="Serve H."/>
            <person name="Koschmieder S."/>
            <person name="Mueller-Tidow C."/>
        </authorList>
    </citation>
    <scope>INTERACTION WITH INCA1</scope>
</reference>
<reference key="19">
    <citation type="journal article" date="2013" name="J. Proteome Res.">
        <title>Toward a comprehensive characterization of a human cancer cell phosphoproteome.</title>
        <authorList>
            <person name="Zhou H."/>
            <person name="Di Palma S."/>
            <person name="Preisinger C."/>
            <person name="Peng M."/>
            <person name="Polat A.N."/>
            <person name="Heck A.J."/>
            <person name="Mohammed S."/>
        </authorList>
    </citation>
    <scope>PHOSPHORYLATION [LARGE SCALE ANALYSIS] AT SER-103 AND SER-387</scope>
    <scope>IDENTIFICATION BY MASS SPECTROMETRY [LARGE SCALE ANALYSIS]</scope>
    <source>
        <tissue>Erythroleukemia</tissue>
    </source>
</reference>
<reference key="20">
    <citation type="journal article" date="2005" name="EMBO J.">
        <title>The structure of cyclin E1/CDK2: implications for CDK2 activation and CDK2-independent roles.</title>
        <authorList>
            <person name="Honda R."/>
            <person name="Lowe E.D."/>
            <person name="Dubinina E."/>
            <person name="Skamnaki V."/>
            <person name="Cook A."/>
            <person name="Brown N.R."/>
            <person name="Johnson L.N."/>
        </authorList>
    </citation>
    <scope>X-RAY CRYSTALLOGRAPHY (2.15 ANGSTROMS) OF 96-378 IN COMPLEX WITH CDK2</scope>
    <scope>INTERACTION WITH CDK2</scope>
</reference>
<reference key="21">
    <citation type="journal article" date="2007" name="Mol. Cell">
        <title>Structure of a Fbw7-Skp1-cyclin E complex: multisite-phosphorylated substrate recognition by SCF ubiquitin ligases.</title>
        <authorList>
            <person name="Hao B."/>
            <person name="Oehlmann S."/>
            <person name="Sowa M.E."/>
            <person name="Harper J.W."/>
            <person name="Pavletich N.P."/>
        </authorList>
    </citation>
    <scope>X-RAY CRYSTALLOGRAPHY (2.5 ANGSTROMS) OF 73-80 IN COMPLEX WITH SKP1 AND FBXW7</scope>
    <scope>PHOSPHORYLATION AT THR-77; THR-395 AND SER-399</scope>
</reference>
<name>CCNE1_HUMAN</name>
<comment type="function">
    <text evidence="9">Essential for the control of the cell cycle at the G1/S (start) transition.</text>
</comment>
<comment type="subunit">
    <text evidence="1 4 5 7 8">Interacts with CDK2 protein kinase to form a serine/threonine kinase holoenzyme complex. The cyclin subunit imparts substrate specificity to the complex (PubMed:15660127). Found in a complex with CDK2, CABLES1 and CCNA1 (By similarity). Part of a complex consisting of UHRF2, CDK2 and CCNE1 (PubMed:15178429). Interacts directly with UHRF2; the interaction ubiquitinates CCNE1 and appears to occur independently of CCNE1 phosphorylation (PubMed:21952639). Interacts with INCA1 (PubMed:21540187).</text>
</comment>
<comment type="interaction">
    <interactant intactId="EBI-519526">
        <id>P24864</id>
    </interactant>
    <interactant intactId="EBI-349905">
        <id>P38398</id>
        <label>BRCA1</label>
    </interactant>
    <organismsDiffer>false</organismsDiffer>
    <experiments>2</experiments>
</comment>
<comment type="interaction">
    <interactant intactId="EBI-519526">
        <id>P24864</id>
    </interactant>
    <interactant intactId="EBI-375096">
        <id>P24941</id>
        <label>CDK2</label>
    </interactant>
    <organismsDiffer>false</organismsDiffer>
    <experiments>24</experiments>
</comment>
<comment type="interaction">
    <interactant intactId="EBI-519526">
        <id>P24864</id>
    </interactant>
    <interactant intactId="EBI-375077">
        <id>P38936</id>
        <label>CDKN1A</label>
    </interactant>
    <organismsDiffer>false</organismsDiffer>
    <experiments>11</experiments>
</comment>
<comment type="interaction">
    <interactant intactId="EBI-519526">
        <id>P24864</id>
    </interactant>
    <interactant intactId="EBI-519280">
        <id>P46527</id>
        <label>CDKN1B</label>
    </interactant>
    <organismsDiffer>false</organismsDiffer>
    <experiments>12</experiments>
</comment>
<comment type="interaction">
    <interactant intactId="EBI-519526">
        <id>P24864</id>
    </interactant>
    <interactant intactId="EBI-866480">
        <id>Q08050</id>
        <label>FOXM1</label>
    </interactant>
    <organismsDiffer>false</organismsDiffer>
    <experiments>2</experiments>
</comment>
<comment type="interaction">
    <interactant intactId="EBI-519526">
        <id>P24864</id>
    </interactant>
    <interactant intactId="EBI-18587381">
        <id>A6NCL1</id>
        <label>GMNC</label>
    </interactant>
    <organismsDiffer>false</organismsDiffer>
    <experiments>3</experiments>
</comment>
<comment type="interaction">
    <interactant intactId="EBI-519526">
        <id>P24864</id>
    </interactant>
    <interactant intactId="EBI-625304">
        <id>Q96PU4</id>
        <label>UHRF2</label>
    </interactant>
    <organismsDiffer>false</organismsDiffer>
    <experiments>4</experiments>
</comment>
<comment type="interaction">
    <interactant intactId="EBI-519526">
        <id>P24864</id>
    </interactant>
    <interactant intactId="EBI-11601938">
        <id>Q5VK71</id>
        <label>AKAP8</label>
    </interactant>
    <organismsDiffer>true</organismsDiffer>
    <experiments>2</experiments>
</comment>
<comment type="subcellular location">
    <subcellularLocation>
        <location evidence="9">Nucleus</location>
    </subcellularLocation>
</comment>
<comment type="alternative products">
    <event type="alternative splicing"/>
    <isoform>
        <id>P24864-1</id>
        <name>E1L</name>
        <name>E-L</name>
        <sequence type="displayed"/>
    </isoform>
    <isoform>
        <id>P24864-2</id>
        <name>E1S</name>
        <sequence type="described" ref="VSP_001253"/>
    </isoform>
    <isoform>
        <id>P24864-3</id>
        <name>3</name>
        <name>E-S</name>
        <sequence type="described" ref="VSP_037381"/>
    </isoform>
</comment>
<comment type="tissue specificity">
    <text evidence="11">Highly expressed in testis and placenta. Low levels in bronchial epithelial cells.</text>
</comment>
<comment type="PTM">
    <text evidence="3 6 8 10">Phosphorylation of both Thr-395 by GSK3 and Ser-399 by CDK2 creates a high affinity degron recognized by FBXW7, and accelerates degradation via the ubiquitin proteasome pathway. Phosphorylation at Thr-77 creates a low affinity degron also recognized by FBXW7.</text>
</comment>
<comment type="PTM">
    <text evidence="8">Ubiquitinated by UHRF2; appears to occur independently of phosphorylation.</text>
</comment>
<comment type="miscellaneous">
    <molecule>Isoform E1S</molecule>
    <text evidence="15">Lacks 49 residues within the cyclin box and cannot complex with CDK2.</text>
</comment>
<comment type="similarity">
    <text evidence="15">Belongs to the cyclin family. Cyclin E subfamily.</text>
</comment>
<feature type="chain" id="PRO_0000080449" description="G1/S-specific cyclin-E1">
    <location>
        <begin position="1"/>
        <end position="410"/>
    </location>
</feature>
<feature type="region of interest" description="Disordered" evidence="2">
    <location>
        <begin position="1"/>
        <end position="30"/>
    </location>
</feature>
<feature type="region of interest" description="Disordered" evidence="2">
    <location>
        <begin position="378"/>
        <end position="410"/>
    </location>
</feature>
<feature type="compositionally biased region" description="Basic and acidic residues" evidence="2">
    <location>
        <begin position="1"/>
        <end position="20"/>
    </location>
</feature>
<feature type="compositionally biased region" description="Polar residues" evidence="2">
    <location>
        <begin position="396"/>
        <end position="410"/>
    </location>
</feature>
<feature type="modified residue" description="Phosphothreonine" evidence="3 6">
    <location>
        <position position="77"/>
    </location>
</feature>
<feature type="modified residue" description="Phosphoserine" evidence="16 17 18">
    <location>
        <position position="103"/>
    </location>
</feature>
<feature type="modified residue" description="Phosphoserine" evidence="3 16 17 18">
    <location>
        <position position="387"/>
    </location>
</feature>
<feature type="modified residue" description="Phosphothreonine; by GSK3" evidence="3 6 10 16">
    <location>
        <position position="395"/>
    </location>
</feature>
<feature type="modified residue" description="Phosphoserine; by CDK2" evidence="3 6">
    <location>
        <position position="399"/>
    </location>
</feature>
<feature type="splice variant" id="VSP_037381" description="In isoform 3." evidence="12 13 14">
    <location>
        <begin position="1"/>
        <end position="15"/>
    </location>
</feature>
<feature type="splice variant" id="VSP_001253" description="In isoform E1S." evidence="15">
    <location>
        <begin position="154"/>
        <end position="196"/>
    </location>
</feature>
<feature type="sequence conflict" description="In Ref. 3; no nucleotide entry." evidence="15" ref="3">
    <original>D</original>
    <variation>K</variation>
    <location>
        <position position="9"/>
    </location>
</feature>
<feature type="strand" evidence="19">
    <location>
        <begin position="109"/>
        <end position="111"/>
    </location>
</feature>
<feature type="helix" evidence="19">
    <location>
        <begin position="113"/>
        <end position="123"/>
    </location>
</feature>
<feature type="turn" evidence="19">
    <location>
        <begin position="124"/>
        <end position="126"/>
    </location>
</feature>
<feature type="helix" evidence="19">
    <location>
        <begin position="133"/>
        <end position="136"/>
    </location>
</feature>
<feature type="helix" evidence="19">
    <location>
        <begin position="142"/>
        <end position="158"/>
    </location>
</feature>
<feature type="helix" evidence="19">
    <location>
        <begin position="163"/>
        <end position="179"/>
    </location>
</feature>
<feature type="helix" evidence="19">
    <location>
        <begin position="185"/>
        <end position="187"/>
    </location>
</feature>
<feature type="helix" evidence="19">
    <location>
        <begin position="188"/>
        <end position="203"/>
    </location>
</feature>
<feature type="helix" evidence="19">
    <location>
        <begin position="210"/>
        <end position="215"/>
    </location>
</feature>
<feature type="turn" evidence="19">
    <location>
        <begin position="216"/>
        <end position="219"/>
    </location>
</feature>
<feature type="helix" evidence="19">
    <location>
        <begin position="223"/>
        <end position="236"/>
    </location>
</feature>
<feature type="turn" evidence="19">
    <location>
        <begin position="237"/>
        <end position="239"/>
    </location>
</feature>
<feature type="helix" evidence="19">
    <location>
        <begin position="246"/>
        <end position="257"/>
    </location>
</feature>
<feature type="turn" evidence="21">
    <location>
        <begin position="260"/>
        <end position="263"/>
    </location>
</feature>
<feature type="strand" evidence="19">
    <location>
        <begin position="265"/>
        <end position="267"/>
    </location>
</feature>
<feature type="helix" evidence="19">
    <location>
        <begin position="272"/>
        <end position="287"/>
    </location>
</feature>
<feature type="helix" evidence="19">
    <location>
        <begin position="289"/>
        <end position="293"/>
    </location>
</feature>
<feature type="helix" evidence="19">
    <location>
        <begin position="296"/>
        <end position="306"/>
    </location>
</feature>
<feature type="helix" evidence="19">
    <location>
        <begin position="310"/>
        <end position="316"/>
    </location>
</feature>
<feature type="helix" evidence="19">
    <location>
        <begin position="321"/>
        <end position="341"/>
    </location>
</feature>
<feature type="strand" evidence="20">
    <location>
        <begin position="350"/>
        <end position="352"/>
    </location>
</feature>
<feature type="helix" evidence="19">
    <location>
        <begin position="354"/>
        <end position="359"/>
    </location>
</feature>
<feature type="helix" evidence="19">
    <location>
        <begin position="366"/>
        <end position="370"/>
    </location>
</feature>
<organism>
    <name type="scientific">Homo sapiens</name>
    <name type="common">Human</name>
    <dbReference type="NCBI Taxonomy" id="9606"/>
    <lineage>
        <taxon>Eukaryota</taxon>
        <taxon>Metazoa</taxon>
        <taxon>Chordata</taxon>
        <taxon>Craniata</taxon>
        <taxon>Vertebrata</taxon>
        <taxon>Euteleostomi</taxon>
        <taxon>Mammalia</taxon>
        <taxon>Eutheria</taxon>
        <taxon>Euarchontoglires</taxon>
        <taxon>Primates</taxon>
        <taxon>Haplorrhini</taxon>
        <taxon>Catarrhini</taxon>
        <taxon>Hominidae</taxon>
        <taxon>Homo</taxon>
    </lineage>
</organism>
<sequence length="410" mass="47077">MPRERRERDAKERDTMKEDGGAEFSARSRKRKANVTVFLQDPDEEMAKIDRTARDQCGSQPWDNNAVCADPCSLIPTPDKEDDDRVYPNSTCKPRIIAPSRGSPLPVLSWANREEVWKIMLNKEKTYLRDQHFLEQHPLLQPKMRAILLDWLMEVCEVYKLHRETFYLAQDFFDRYMATQENVVKTLLQLIGISSLFIAAKLEEIYPPKLHQFAYVTDGACSGDEILTMELMIMKALKWRLSPLTIVSWLNVYMQVAYLNDLHEVLLPQYPQQIFIQIAELLDLCVLDVDCLEFPYGILAASALYHFSSSELMQKVSGYQWCDIENCVKWMVPFAMVIRETGSSKLKHFRGVADEDAHNIQTHRDSLDLLDKARAKKAMLSEQNRASPLPSGLLTPPQSGKKQSSGPEMA</sequence>
<keyword id="KW-0002">3D-structure</keyword>
<keyword id="KW-0025">Alternative splicing</keyword>
<keyword id="KW-0131">Cell cycle</keyword>
<keyword id="KW-0132">Cell division</keyword>
<keyword id="KW-0195">Cyclin</keyword>
<keyword id="KW-0539">Nucleus</keyword>
<keyword id="KW-0597">Phosphoprotein</keyword>
<keyword id="KW-1267">Proteomics identification</keyword>
<keyword id="KW-1185">Reference proteome</keyword>
<keyword id="KW-0832">Ubl conjugation</keyword>
<dbReference type="EMBL" id="M74093">
    <property type="status" value="NOT_ANNOTATED_CDS"/>
    <property type="molecule type" value="mRNA"/>
</dbReference>
<dbReference type="EMBL" id="M73812">
    <property type="status" value="NOT_ANNOTATED_CDS"/>
    <property type="molecule type" value="mRNA"/>
</dbReference>
<dbReference type="EMBL" id="AK291549">
    <property type="protein sequence ID" value="BAF84238.1"/>
    <property type="molecule type" value="mRNA"/>
</dbReference>
<dbReference type="EMBL" id="AF518727">
    <property type="protein sequence ID" value="AAM54043.1"/>
    <property type="molecule type" value="Genomic_DNA"/>
</dbReference>
<dbReference type="EMBL" id="BC035498">
    <property type="protein sequence ID" value="AAH35498.1"/>
    <property type="molecule type" value="mRNA"/>
</dbReference>
<dbReference type="EMBL" id="X95406">
    <property type="protein sequence ID" value="CAA64687.1"/>
    <property type="molecule type" value="Genomic_DNA"/>
</dbReference>
<dbReference type="EMBL" id="X95406">
    <property type="protein sequence ID" value="CAA64688.1"/>
    <property type="molecule type" value="Genomic_DNA"/>
</dbReference>
<dbReference type="EMBL" id="AH003247">
    <property type="protein sequence ID" value="AAA83269.1"/>
    <property type="molecule type" value="Genomic_DNA"/>
</dbReference>
<dbReference type="CCDS" id="CCDS12419.1">
    <molecule id="P24864-1"/>
</dbReference>
<dbReference type="CCDS" id="CCDS46035.1">
    <molecule id="P24864-3"/>
</dbReference>
<dbReference type="PIR" id="A40270">
    <property type="entry name" value="A40270"/>
</dbReference>
<dbReference type="RefSeq" id="NP_001229.1">
    <molecule id="P24864-1"/>
    <property type="nucleotide sequence ID" value="NM_001238.4"/>
</dbReference>
<dbReference type="RefSeq" id="NP_001309191.1">
    <molecule id="P24864-3"/>
    <property type="nucleotide sequence ID" value="NM_001322262.2"/>
</dbReference>
<dbReference type="PDB" id="1W98">
    <property type="method" value="X-ray"/>
    <property type="resolution" value="2.15 A"/>
    <property type="chains" value="B=96-378"/>
</dbReference>
<dbReference type="PDB" id="5L2W">
    <property type="method" value="X-ray"/>
    <property type="resolution" value="2.80 A"/>
    <property type="chains" value="B=96-378"/>
</dbReference>
<dbReference type="PDB" id="7KJS">
    <property type="method" value="X-ray"/>
    <property type="resolution" value="2.19 A"/>
    <property type="chains" value="B=96-378"/>
</dbReference>
<dbReference type="PDB" id="7XQK">
    <property type="method" value="X-ray"/>
    <property type="resolution" value="2.25 A"/>
    <property type="chains" value="B=96-378"/>
</dbReference>
<dbReference type="PDB" id="8H4R">
    <property type="method" value="X-ray"/>
    <property type="resolution" value="2.75 A"/>
    <property type="chains" value="B=96-378"/>
</dbReference>
<dbReference type="PDB" id="8H6P">
    <property type="method" value="X-ray"/>
    <property type="resolution" value="2.44 A"/>
    <property type="chains" value="B=103-373"/>
</dbReference>
<dbReference type="PDB" id="8H6T">
    <property type="method" value="X-ray"/>
    <property type="resolution" value="3.00 A"/>
    <property type="chains" value="B=102-373"/>
</dbReference>
<dbReference type="PDB" id="8VQ3">
    <property type="method" value="X-ray"/>
    <property type="resolution" value="1.84 A"/>
    <property type="chains" value="B=96-378"/>
</dbReference>
<dbReference type="PDB" id="8VQ4">
    <property type="method" value="X-ray"/>
    <property type="resolution" value="1.90 A"/>
    <property type="chains" value="B=96-378"/>
</dbReference>
<dbReference type="PDBsum" id="1W98"/>
<dbReference type="PDBsum" id="5L2W"/>
<dbReference type="PDBsum" id="7KJS"/>
<dbReference type="PDBsum" id="7XQK"/>
<dbReference type="PDBsum" id="8H4R"/>
<dbReference type="PDBsum" id="8H6P"/>
<dbReference type="PDBsum" id="8H6T"/>
<dbReference type="PDBsum" id="8VQ3"/>
<dbReference type="PDBsum" id="8VQ4"/>
<dbReference type="SMR" id="P24864"/>
<dbReference type="BioGRID" id="107338">
    <property type="interactions" value="115"/>
</dbReference>
<dbReference type="ComplexPortal" id="CPX-2015">
    <property type="entry name" value="Cyclin E1-CDK2 complex"/>
</dbReference>
<dbReference type="CORUM" id="P24864"/>
<dbReference type="DIP" id="DIP-149N"/>
<dbReference type="FunCoup" id="P24864">
    <property type="interactions" value="1670"/>
</dbReference>
<dbReference type="IntAct" id="P24864">
    <property type="interactions" value="30"/>
</dbReference>
<dbReference type="MINT" id="P24864"/>
<dbReference type="STRING" id="9606.ENSP00000262643"/>
<dbReference type="BindingDB" id="P24864"/>
<dbReference type="ChEMBL" id="CHEMBL3617"/>
<dbReference type="iPTMnet" id="P24864"/>
<dbReference type="PhosphoSitePlus" id="P24864"/>
<dbReference type="BioMuta" id="CCNE1"/>
<dbReference type="DMDM" id="3041657"/>
<dbReference type="CPTAC" id="CPTAC-2810"/>
<dbReference type="jPOST" id="P24864"/>
<dbReference type="MassIVE" id="P24864"/>
<dbReference type="PaxDb" id="9606-ENSP00000262643"/>
<dbReference type="PeptideAtlas" id="P24864"/>
<dbReference type="ProteomicsDB" id="54236">
    <molecule id="P24864-1"/>
</dbReference>
<dbReference type="ProteomicsDB" id="54237">
    <molecule id="P24864-2"/>
</dbReference>
<dbReference type="ProteomicsDB" id="54238">
    <molecule id="P24864-3"/>
</dbReference>
<dbReference type="Pumba" id="P24864"/>
<dbReference type="Antibodypedia" id="3286">
    <property type="antibodies" value="1209 antibodies from 49 providers"/>
</dbReference>
<dbReference type="DNASU" id="898"/>
<dbReference type="Ensembl" id="ENST00000262643.8">
    <molecule id="P24864-1"/>
    <property type="protein sequence ID" value="ENSP00000262643.3"/>
    <property type="gene ID" value="ENSG00000105173.14"/>
</dbReference>
<dbReference type="Ensembl" id="ENST00000444983.6">
    <molecule id="P24864-3"/>
    <property type="protein sequence ID" value="ENSP00000410179.2"/>
    <property type="gene ID" value="ENSG00000105173.14"/>
</dbReference>
<dbReference type="GeneID" id="898"/>
<dbReference type="KEGG" id="hsa:898"/>
<dbReference type="MANE-Select" id="ENST00000262643.8">
    <property type="protein sequence ID" value="ENSP00000262643.3"/>
    <property type="RefSeq nucleotide sequence ID" value="NM_001238.4"/>
    <property type="RefSeq protein sequence ID" value="NP_001229.1"/>
</dbReference>
<dbReference type="UCSC" id="uc002nsn.4">
    <molecule id="P24864-1"/>
    <property type="organism name" value="human"/>
</dbReference>
<dbReference type="AGR" id="HGNC:1589"/>
<dbReference type="CTD" id="898"/>
<dbReference type="DisGeNET" id="898"/>
<dbReference type="GeneCards" id="CCNE1"/>
<dbReference type="HGNC" id="HGNC:1589">
    <property type="gene designation" value="CCNE1"/>
</dbReference>
<dbReference type="HPA" id="ENSG00000105173">
    <property type="expression patterns" value="Tissue enhanced (bone marrow, placenta)"/>
</dbReference>
<dbReference type="MalaCards" id="CCNE1"/>
<dbReference type="MIM" id="123837">
    <property type="type" value="gene"/>
</dbReference>
<dbReference type="neXtProt" id="NX_P24864"/>
<dbReference type="OpenTargets" id="ENSG00000105173"/>
<dbReference type="PharmGKB" id="PA96"/>
<dbReference type="VEuPathDB" id="HostDB:ENSG00000105173"/>
<dbReference type="eggNOG" id="KOG0655">
    <property type="taxonomic scope" value="Eukaryota"/>
</dbReference>
<dbReference type="GeneTree" id="ENSGT00940000156256"/>
<dbReference type="InParanoid" id="P24864"/>
<dbReference type="OMA" id="KMEMTRK"/>
<dbReference type="OrthoDB" id="5590282at2759"/>
<dbReference type="PAN-GO" id="P24864">
    <property type="GO annotations" value="7 GO annotations based on evolutionary models"/>
</dbReference>
<dbReference type="PhylomeDB" id="P24864"/>
<dbReference type="TreeFam" id="TF101005"/>
<dbReference type="PathwayCommons" id="P24864"/>
<dbReference type="Reactome" id="R-HSA-1538133">
    <property type="pathway name" value="G0 and Early G1"/>
</dbReference>
<dbReference type="Reactome" id="R-HSA-187577">
    <property type="pathway name" value="SCF(Skp2)-mediated degradation of p27/p21"/>
</dbReference>
<dbReference type="Reactome" id="R-HSA-2559586">
    <property type="pathway name" value="DNA Damage/Telomere Stress Induced Senescence"/>
</dbReference>
<dbReference type="Reactome" id="R-HSA-390471">
    <property type="pathway name" value="Association of TriC/CCT with target proteins during biosynthesis"/>
</dbReference>
<dbReference type="Reactome" id="R-HSA-6804116">
    <property type="pathway name" value="TP53 Regulates Transcription of Genes Involved in G1 Cell Cycle Arrest"/>
</dbReference>
<dbReference type="Reactome" id="R-HSA-69017">
    <property type="pathway name" value="CDK-mediated phosphorylation and removal of Cdc6"/>
</dbReference>
<dbReference type="Reactome" id="R-HSA-69200">
    <property type="pathway name" value="Phosphorylation of proteins involved in G1/S transition by active Cyclin E:Cdk2 complexes"/>
</dbReference>
<dbReference type="Reactome" id="R-HSA-69202">
    <property type="pathway name" value="Cyclin E associated events during G1/S transition"/>
</dbReference>
<dbReference type="Reactome" id="R-HSA-69205">
    <property type="pathway name" value="G1/S-Specific Transcription"/>
</dbReference>
<dbReference type="Reactome" id="R-HSA-69231">
    <property type="pathway name" value="Cyclin D associated events in G1"/>
</dbReference>
<dbReference type="Reactome" id="R-HSA-69563">
    <property type="pathway name" value="p53-Dependent G1 DNA Damage Response"/>
</dbReference>
<dbReference type="Reactome" id="R-HSA-8849470">
    <property type="pathway name" value="PTK6 Regulates Cell Cycle"/>
</dbReference>
<dbReference type="Reactome" id="R-HSA-9661069">
    <property type="pathway name" value="Defective binding of RB1 mutants to E2F1,(E2F2, E2F3)"/>
</dbReference>
<dbReference type="Reactome" id="R-HSA-9706019">
    <property type="pathway name" value="RHOBTB3 ATPase cycle"/>
</dbReference>
<dbReference type="SignaLink" id="P24864"/>
<dbReference type="SIGNOR" id="P24864"/>
<dbReference type="BioGRID-ORCS" id="898">
    <property type="hits" value="66 hits in 1172 CRISPR screens"/>
</dbReference>
<dbReference type="ChiTaRS" id="CCNE1">
    <property type="organism name" value="human"/>
</dbReference>
<dbReference type="EvolutionaryTrace" id="P24864"/>
<dbReference type="GeneWiki" id="Cyclin_E1"/>
<dbReference type="GenomeRNAi" id="898"/>
<dbReference type="Pharos" id="P24864">
    <property type="development level" value="Tchem"/>
</dbReference>
<dbReference type="PRO" id="PR:P24864"/>
<dbReference type="Proteomes" id="UP000005640">
    <property type="component" value="Chromosome 19"/>
</dbReference>
<dbReference type="RNAct" id="P24864">
    <property type="molecule type" value="protein"/>
</dbReference>
<dbReference type="Bgee" id="ENSG00000105173">
    <property type="expression patterns" value="Expressed in secondary oocyte and 137 other cell types or tissues"/>
</dbReference>
<dbReference type="ExpressionAtlas" id="P24864">
    <property type="expression patterns" value="baseline and differential"/>
</dbReference>
<dbReference type="GO" id="GO:0097134">
    <property type="term" value="C:cyclin E1-CDK2 complex"/>
    <property type="evidence" value="ECO:0000353"/>
    <property type="project" value="ComplexPortal"/>
</dbReference>
<dbReference type="GO" id="GO:0005737">
    <property type="term" value="C:cytoplasm"/>
    <property type="evidence" value="ECO:0000318"/>
    <property type="project" value="GO_Central"/>
</dbReference>
<dbReference type="GO" id="GO:0005829">
    <property type="term" value="C:cytosol"/>
    <property type="evidence" value="ECO:0000304"/>
    <property type="project" value="Reactome"/>
</dbReference>
<dbReference type="GO" id="GO:0005815">
    <property type="term" value="C:microtubule organizing center"/>
    <property type="evidence" value="ECO:0000318"/>
    <property type="project" value="GO_Central"/>
</dbReference>
<dbReference type="GO" id="GO:0005654">
    <property type="term" value="C:nucleoplasm"/>
    <property type="evidence" value="ECO:0000314"/>
    <property type="project" value="HPA"/>
</dbReference>
<dbReference type="GO" id="GO:0005634">
    <property type="term" value="C:nucleus"/>
    <property type="evidence" value="ECO:0000314"/>
    <property type="project" value="UniProtKB"/>
</dbReference>
<dbReference type="GO" id="GO:0016538">
    <property type="term" value="F:cyclin-dependent protein serine/threonine kinase regulator activity"/>
    <property type="evidence" value="ECO:0000318"/>
    <property type="project" value="GO_Central"/>
</dbReference>
<dbReference type="GO" id="GO:0016301">
    <property type="term" value="F:kinase activity"/>
    <property type="evidence" value="ECO:0007669"/>
    <property type="project" value="Ensembl"/>
</dbReference>
<dbReference type="GO" id="GO:0019901">
    <property type="term" value="F:protein kinase binding"/>
    <property type="evidence" value="ECO:0007669"/>
    <property type="project" value="Ensembl"/>
</dbReference>
<dbReference type="GO" id="GO:0051301">
    <property type="term" value="P:cell division"/>
    <property type="evidence" value="ECO:0007669"/>
    <property type="project" value="UniProtKB-KW"/>
</dbReference>
<dbReference type="GO" id="GO:0006270">
    <property type="term" value="P:DNA replication initiation"/>
    <property type="evidence" value="ECO:0007669"/>
    <property type="project" value="Ensembl"/>
</dbReference>
<dbReference type="GO" id="GO:0000082">
    <property type="term" value="P:G1/S transition of mitotic cell cycle"/>
    <property type="evidence" value="ECO:0000315"/>
    <property type="project" value="BHF-UCL"/>
</dbReference>
<dbReference type="GO" id="GO:0007129">
    <property type="term" value="P:homologous chromosome pairing at meiosis"/>
    <property type="evidence" value="ECO:0007669"/>
    <property type="project" value="Ensembl"/>
</dbReference>
<dbReference type="GO" id="GO:0000122">
    <property type="term" value="P:negative regulation of transcription by RNA polymerase II"/>
    <property type="evidence" value="ECO:0007669"/>
    <property type="project" value="Ensembl"/>
</dbReference>
<dbReference type="GO" id="GO:1900087">
    <property type="term" value="P:positive regulation of G1/S transition of mitotic cell cycle"/>
    <property type="evidence" value="ECO:0000318"/>
    <property type="project" value="GO_Central"/>
</dbReference>
<dbReference type="GO" id="GO:1902462">
    <property type="term" value="P:positive regulation of mesenchymal stem cell proliferation"/>
    <property type="evidence" value="ECO:0000315"/>
    <property type="project" value="BHF-UCL"/>
</dbReference>
<dbReference type="GO" id="GO:0006468">
    <property type="term" value="P:protein phosphorylation"/>
    <property type="evidence" value="ECO:0000315"/>
    <property type="project" value="MGI"/>
</dbReference>
<dbReference type="GO" id="GO:0032880">
    <property type="term" value="P:regulation of protein localization"/>
    <property type="evidence" value="ECO:0007669"/>
    <property type="project" value="Ensembl"/>
</dbReference>
<dbReference type="GO" id="GO:0000723">
    <property type="term" value="P:telomere maintenance"/>
    <property type="evidence" value="ECO:0007669"/>
    <property type="project" value="Ensembl"/>
</dbReference>
<dbReference type="GO" id="GO:0016055">
    <property type="term" value="P:Wnt signaling pathway"/>
    <property type="evidence" value="ECO:0007669"/>
    <property type="project" value="Ensembl"/>
</dbReference>
<dbReference type="CDD" id="cd20579">
    <property type="entry name" value="CYCLIN_CCNE1_rpt1"/>
    <property type="match status" value="1"/>
</dbReference>
<dbReference type="CDD" id="cd20581">
    <property type="entry name" value="CYCLIN_CCNE1_rpt2"/>
    <property type="match status" value="1"/>
</dbReference>
<dbReference type="DisProt" id="DP01120"/>
<dbReference type="FunFam" id="1.10.472.10:FF:000024">
    <property type="entry name" value="G1/S-specific cyclin-E1"/>
    <property type="match status" value="1"/>
</dbReference>
<dbReference type="FunFam" id="1.10.472.10:FF:000140">
    <property type="entry name" value="G1/S-specific cyclin-E1"/>
    <property type="match status" value="1"/>
</dbReference>
<dbReference type="Gene3D" id="1.10.472.10">
    <property type="entry name" value="Cyclin-like"/>
    <property type="match status" value="2"/>
</dbReference>
<dbReference type="IDEAL" id="IID00603"/>
<dbReference type="InterPro" id="IPR039361">
    <property type="entry name" value="Cyclin"/>
</dbReference>
<dbReference type="InterPro" id="IPR013763">
    <property type="entry name" value="Cyclin-like_dom"/>
</dbReference>
<dbReference type="InterPro" id="IPR036915">
    <property type="entry name" value="Cyclin-like_sf"/>
</dbReference>
<dbReference type="InterPro" id="IPR004367">
    <property type="entry name" value="Cyclin_C-dom"/>
</dbReference>
<dbReference type="InterPro" id="IPR006671">
    <property type="entry name" value="Cyclin_N"/>
</dbReference>
<dbReference type="InterPro" id="IPR048258">
    <property type="entry name" value="Cyclins_cyclin-box"/>
</dbReference>
<dbReference type="PANTHER" id="PTHR10177">
    <property type="entry name" value="CYCLINS"/>
    <property type="match status" value="1"/>
</dbReference>
<dbReference type="Pfam" id="PF02984">
    <property type="entry name" value="Cyclin_C"/>
    <property type="match status" value="1"/>
</dbReference>
<dbReference type="Pfam" id="PF00134">
    <property type="entry name" value="Cyclin_N"/>
    <property type="match status" value="1"/>
</dbReference>
<dbReference type="SMART" id="SM00385">
    <property type="entry name" value="CYCLIN"/>
    <property type="match status" value="1"/>
</dbReference>
<dbReference type="SMART" id="SM01332">
    <property type="entry name" value="Cyclin_C"/>
    <property type="match status" value="1"/>
</dbReference>
<dbReference type="SUPFAM" id="SSF47954">
    <property type="entry name" value="Cyclin-like"/>
    <property type="match status" value="2"/>
</dbReference>
<dbReference type="PROSITE" id="PS00292">
    <property type="entry name" value="CYCLINS"/>
    <property type="match status" value="1"/>
</dbReference>
<evidence type="ECO:0000250" key="1">
    <source>
        <dbReference type="UniProtKB" id="Q61457"/>
    </source>
</evidence>
<evidence type="ECO:0000256" key="2">
    <source>
        <dbReference type="SAM" id="MobiDB-lite"/>
    </source>
</evidence>
<evidence type="ECO:0000269" key="3">
    <source>
    </source>
</evidence>
<evidence type="ECO:0000269" key="4">
    <source>
    </source>
</evidence>
<evidence type="ECO:0000269" key="5">
    <source>
    </source>
</evidence>
<evidence type="ECO:0000269" key="6">
    <source>
    </source>
</evidence>
<evidence type="ECO:0000269" key="7">
    <source>
    </source>
</evidence>
<evidence type="ECO:0000269" key="8">
    <source>
    </source>
</evidence>
<evidence type="ECO:0000269" key="9">
    <source>
    </source>
</evidence>
<evidence type="ECO:0000269" key="10">
    <source>
    </source>
</evidence>
<evidence type="ECO:0000269" key="11">
    <source>
    </source>
</evidence>
<evidence type="ECO:0000303" key="12">
    <source>
    </source>
</evidence>
<evidence type="ECO:0000303" key="13">
    <source>
    </source>
</evidence>
<evidence type="ECO:0000303" key="14">
    <source>
    </source>
</evidence>
<evidence type="ECO:0000305" key="15"/>
<evidence type="ECO:0007744" key="16">
    <source>
    </source>
</evidence>
<evidence type="ECO:0007744" key="17">
    <source>
    </source>
</evidence>
<evidence type="ECO:0007744" key="18">
    <source>
    </source>
</evidence>
<evidence type="ECO:0007829" key="19">
    <source>
        <dbReference type="PDB" id="1W98"/>
    </source>
</evidence>
<evidence type="ECO:0007829" key="20">
    <source>
        <dbReference type="PDB" id="8H6P"/>
    </source>
</evidence>
<evidence type="ECO:0007829" key="21">
    <source>
        <dbReference type="PDB" id="8H6T"/>
    </source>
</evidence>